<evidence type="ECO:0000255" key="1">
    <source>
        <dbReference type="HAMAP-Rule" id="MF_00418"/>
    </source>
</evidence>
<evidence type="ECO:0000305" key="2"/>
<comment type="function">
    <text evidence="1">Catalyzes the condensation of (S)-aspartate-beta-semialdehyde [(S)-ASA] and pyruvate to 4-hydroxy-tetrahydrodipicolinate (HTPA).</text>
</comment>
<comment type="catalytic activity">
    <reaction evidence="1">
        <text>L-aspartate 4-semialdehyde + pyruvate = (2S,4S)-4-hydroxy-2,3,4,5-tetrahydrodipicolinate + H2O + H(+)</text>
        <dbReference type="Rhea" id="RHEA:34171"/>
        <dbReference type="ChEBI" id="CHEBI:15361"/>
        <dbReference type="ChEBI" id="CHEBI:15377"/>
        <dbReference type="ChEBI" id="CHEBI:15378"/>
        <dbReference type="ChEBI" id="CHEBI:67139"/>
        <dbReference type="ChEBI" id="CHEBI:537519"/>
        <dbReference type="EC" id="4.3.3.7"/>
    </reaction>
</comment>
<comment type="pathway">
    <text evidence="1">Amino-acid biosynthesis; L-lysine biosynthesis via DAP pathway; (S)-tetrahydrodipicolinate from L-aspartate: step 3/4.</text>
</comment>
<comment type="subunit">
    <text evidence="1">Homotetramer; dimer of dimers.</text>
</comment>
<comment type="subcellular location">
    <subcellularLocation>
        <location evidence="1">Cytoplasm</location>
    </subcellularLocation>
</comment>
<comment type="similarity">
    <text evidence="1">Belongs to the DapA family.</text>
</comment>
<comment type="caution">
    <text evidence="2">Was originally thought to be a dihydrodipicolinate synthase (DHDPS), catalyzing the condensation of (S)-aspartate-beta-semialdehyde [(S)-ASA] and pyruvate to dihydrodipicolinate (DHDP). However, it was shown in E.coli that the product of the enzymatic reaction is not dihydrodipicolinate but in fact (4S)-4-hydroxy-2,3,4,5-tetrahydro-(2S)-dipicolinic acid (HTPA), and that the consecutive dehydration reaction leading to DHDP is not spontaneous but catalyzed by DapB.</text>
</comment>
<proteinExistence type="inferred from homology"/>
<name>DAPA_BIFA0</name>
<sequence>MSDGIMHLLDPAPFGRVLPAMITPMKPNGDVDFDMAQTVAKQLVADGADGLVVNGTTGESPTTHMDEKVELVKAVKEVVDVPVISGAGSNDTAHTVRMVEQTQEAGADAVLVVCPYYSRPSQQGIFCHYQAVNESADKPIIVYDVPGRTGVRIALDTYVHLAELDHVKAVKDATGDIAGAVRKRMETGLTWYSGDDALYLPFLSIGAVGIISVVAHAAAKPMRELAEAFDRGDIAKAQGLANRIAPVIEAMNGTGFQAVMAKAALKVRGIMECTTMRLPNIGPNDEQIEVVRDGLRASGLIPE</sequence>
<reference key="1">
    <citation type="journal article" date="2009" name="J. Bacteriol.">
        <title>Genome sequence of the probiotic bacterium Bifidobacterium animalis subsp. lactis AD011.</title>
        <authorList>
            <person name="Kim J.F."/>
            <person name="Jeong H."/>
            <person name="Yu D.S."/>
            <person name="Choi S.-H."/>
            <person name="Hur C.-G."/>
            <person name="Park M.-S."/>
            <person name="Yoon S.H."/>
            <person name="Kim D.-W."/>
            <person name="Ji G.E."/>
            <person name="Park H.-S."/>
            <person name="Oh T.K."/>
        </authorList>
    </citation>
    <scope>NUCLEOTIDE SEQUENCE [LARGE SCALE GENOMIC DNA]</scope>
    <source>
        <strain>AD011</strain>
    </source>
</reference>
<protein>
    <recommendedName>
        <fullName evidence="1">4-hydroxy-tetrahydrodipicolinate synthase</fullName>
        <shortName evidence="1">HTPA synthase</shortName>
        <ecNumber evidence="1">4.3.3.7</ecNumber>
    </recommendedName>
</protein>
<organism>
    <name type="scientific">Bifidobacterium animalis subsp. lactis (strain AD011)</name>
    <dbReference type="NCBI Taxonomy" id="442563"/>
    <lineage>
        <taxon>Bacteria</taxon>
        <taxon>Bacillati</taxon>
        <taxon>Actinomycetota</taxon>
        <taxon>Actinomycetes</taxon>
        <taxon>Bifidobacteriales</taxon>
        <taxon>Bifidobacteriaceae</taxon>
        <taxon>Bifidobacterium</taxon>
    </lineage>
</organism>
<feature type="chain" id="PRO_1000134858" description="4-hydroxy-tetrahydrodipicolinate synthase">
    <location>
        <begin position="1"/>
        <end position="303"/>
    </location>
</feature>
<feature type="active site" description="Proton donor/acceptor" evidence="1">
    <location>
        <position position="143"/>
    </location>
</feature>
<feature type="active site" description="Schiff-base intermediate with substrate" evidence="1">
    <location>
        <position position="171"/>
    </location>
</feature>
<feature type="binding site" evidence="1">
    <location>
        <position position="57"/>
    </location>
    <ligand>
        <name>pyruvate</name>
        <dbReference type="ChEBI" id="CHEBI:15361"/>
    </ligand>
</feature>
<feature type="binding site" evidence="1">
    <location>
        <position position="211"/>
    </location>
    <ligand>
        <name>pyruvate</name>
        <dbReference type="ChEBI" id="CHEBI:15361"/>
    </ligand>
</feature>
<feature type="site" description="Part of a proton relay during catalysis" evidence="1">
    <location>
        <position position="56"/>
    </location>
</feature>
<feature type="site" description="Part of a proton relay during catalysis" evidence="1">
    <location>
        <position position="117"/>
    </location>
</feature>
<dbReference type="EC" id="4.3.3.7" evidence="1"/>
<dbReference type="EMBL" id="CP001213">
    <property type="protein sequence ID" value="ACL28833.1"/>
    <property type="molecule type" value="Genomic_DNA"/>
</dbReference>
<dbReference type="RefSeq" id="WP_004269222.1">
    <property type="nucleotide sequence ID" value="NC_011835.1"/>
</dbReference>
<dbReference type="SMR" id="B8DWI2"/>
<dbReference type="STRING" id="442563.BLA_0534"/>
<dbReference type="GeneID" id="29695858"/>
<dbReference type="KEGG" id="bla:BLA_0534"/>
<dbReference type="HOGENOM" id="CLU_049343_7_1_11"/>
<dbReference type="UniPathway" id="UPA00034">
    <property type="reaction ID" value="UER00017"/>
</dbReference>
<dbReference type="Proteomes" id="UP000002456">
    <property type="component" value="Chromosome"/>
</dbReference>
<dbReference type="GO" id="GO:0005829">
    <property type="term" value="C:cytosol"/>
    <property type="evidence" value="ECO:0007669"/>
    <property type="project" value="TreeGrafter"/>
</dbReference>
<dbReference type="GO" id="GO:0008840">
    <property type="term" value="F:4-hydroxy-tetrahydrodipicolinate synthase activity"/>
    <property type="evidence" value="ECO:0007669"/>
    <property type="project" value="UniProtKB-UniRule"/>
</dbReference>
<dbReference type="GO" id="GO:0019877">
    <property type="term" value="P:diaminopimelate biosynthetic process"/>
    <property type="evidence" value="ECO:0007669"/>
    <property type="project" value="UniProtKB-UniRule"/>
</dbReference>
<dbReference type="GO" id="GO:0009089">
    <property type="term" value="P:lysine biosynthetic process via diaminopimelate"/>
    <property type="evidence" value="ECO:0007669"/>
    <property type="project" value="UniProtKB-UniRule"/>
</dbReference>
<dbReference type="CDD" id="cd00950">
    <property type="entry name" value="DHDPS"/>
    <property type="match status" value="1"/>
</dbReference>
<dbReference type="Gene3D" id="3.20.20.70">
    <property type="entry name" value="Aldolase class I"/>
    <property type="match status" value="1"/>
</dbReference>
<dbReference type="HAMAP" id="MF_00418">
    <property type="entry name" value="DapA"/>
    <property type="match status" value="1"/>
</dbReference>
<dbReference type="InterPro" id="IPR013785">
    <property type="entry name" value="Aldolase_TIM"/>
</dbReference>
<dbReference type="InterPro" id="IPR005263">
    <property type="entry name" value="DapA"/>
</dbReference>
<dbReference type="InterPro" id="IPR002220">
    <property type="entry name" value="DapA-like"/>
</dbReference>
<dbReference type="InterPro" id="IPR020625">
    <property type="entry name" value="Schiff_base-form_aldolases_AS"/>
</dbReference>
<dbReference type="InterPro" id="IPR020624">
    <property type="entry name" value="Schiff_base-form_aldolases_CS"/>
</dbReference>
<dbReference type="NCBIfam" id="TIGR00674">
    <property type="entry name" value="dapA"/>
    <property type="match status" value="1"/>
</dbReference>
<dbReference type="PANTHER" id="PTHR12128:SF66">
    <property type="entry name" value="4-HYDROXY-2-OXOGLUTARATE ALDOLASE, MITOCHONDRIAL"/>
    <property type="match status" value="1"/>
</dbReference>
<dbReference type="PANTHER" id="PTHR12128">
    <property type="entry name" value="DIHYDRODIPICOLINATE SYNTHASE"/>
    <property type="match status" value="1"/>
</dbReference>
<dbReference type="Pfam" id="PF00701">
    <property type="entry name" value="DHDPS"/>
    <property type="match status" value="1"/>
</dbReference>
<dbReference type="PIRSF" id="PIRSF001365">
    <property type="entry name" value="DHDPS"/>
    <property type="match status" value="1"/>
</dbReference>
<dbReference type="PRINTS" id="PR00146">
    <property type="entry name" value="DHPICSNTHASE"/>
</dbReference>
<dbReference type="SMART" id="SM01130">
    <property type="entry name" value="DHDPS"/>
    <property type="match status" value="1"/>
</dbReference>
<dbReference type="SUPFAM" id="SSF51569">
    <property type="entry name" value="Aldolase"/>
    <property type="match status" value="1"/>
</dbReference>
<dbReference type="PROSITE" id="PS00665">
    <property type="entry name" value="DHDPS_1"/>
    <property type="match status" value="1"/>
</dbReference>
<dbReference type="PROSITE" id="PS00666">
    <property type="entry name" value="DHDPS_2"/>
    <property type="match status" value="1"/>
</dbReference>
<gene>
    <name evidence="1" type="primary">dapA</name>
    <name type="ordered locus">BLA_0534</name>
</gene>
<accession>B8DWI2</accession>
<keyword id="KW-0028">Amino-acid biosynthesis</keyword>
<keyword id="KW-0963">Cytoplasm</keyword>
<keyword id="KW-0220">Diaminopimelate biosynthesis</keyword>
<keyword id="KW-0456">Lyase</keyword>
<keyword id="KW-0457">Lysine biosynthesis</keyword>
<keyword id="KW-1185">Reference proteome</keyword>
<keyword id="KW-0704">Schiff base</keyword>